<name>YQGF_LACJO</name>
<reference key="1">
    <citation type="journal article" date="2004" name="Proc. Natl. Acad. Sci. U.S.A.">
        <title>The genome sequence of the probiotic intestinal bacterium Lactobacillus johnsonii NCC 533.</title>
        <authorList>
            <person name="Pridmore R.D."/>
            <person name="Berger B."/>
            <person name="Desiere F."/>
            <person name="Vilanova D."/>
            <person name="Barretto C."/>
            <person name="Pittet A.-C."/>
            <person name="Zwahlen M.-C."/>
            <person name="Rouvet M."/>
            <person name="Altermann E."/>
            <person name="Barrangou R."/>
            <person name="Mollet B."/>
            <person name="Mercenier A."/>
            <person name="Klaenhammer T."/>
            <person name="Arigoni F."/>
            <person name="Schell M.A."/>
        </authorList>
    </citation>
    <scope>NUCLEOTIDE SEQUENCE [LARGE SCALE GENOMIC DNA]</scope>
    <source>
        <strain>CNCM I-1225 / La1 / NCC 533</strain>
    </source>
</reference>
<accession>Q74KV1</accession>
<organism>
    <name type="scientific">Lactobacillus johnsonii (strain CNCM I-12250 / La1 / NCC 533)</name>
    <dbReference type="NCBI Taxonomy" id="257314"/>
    <lineage>
        <taxon>Bacteria</taxon>
        <taxon>Bacillati</taxon>
        <taxon>Bacillota</taxon>
        <taxon>Bacilli</taxon>
        <taxon>Lactobacillales</taxon>
        <taxon>Lactobacillaceae</taxon>
        <taxon>Lactobacillus</taxon>
    </lineage>
</organism>
<sequence>MRLLGLDVGSKTVGVAISDPLGITAQELETIKIDESKFSFGLRQIRRIVRKYDVEGFVLGLPKNMDGSSGHSVERSKQYGERLKEKFDLPVYYMDERLTTVQADRILVEEAGVHDRVERKKVIDQMAAVLILQNYLEATRKDN</sequence>
<dbReference type="EC" id="3.1.-.-" evidence="1"/>
<dbReference type="EMBL" id="AE017198">
    <property type="protein sequence ID" value="AAS08468.1"/>
    <property type="molecule type" value="Genomic_DNA"/>
</dbReference>
<dbReference type="RefSeq" id="WP_011161610.1">
    <property type="nucleotide sequence ID" value="NC_005362.1"/>
</dbReference>
<dbReference type="SMR" id="Q74KV1"/>
<dbReference type="KEGG" id="ljo:LJ_0476"/>
<dbReference type="eggNOG" id="COG0816">
    <property type="taxonomic scope" value="Bacteria"/>
</dbReference>
<dbReference type="HOGENOM" id="CLU_098240_2_0_9"/>
<dbReference type="Proteomes" id="UP000000581">
    <property type="component" value="Chromosome"/>
</dbReference>
<dbReference type="GO" id="GO:0005829">
    <property type="term" value="C:cytosol"/>
    <property type="evidence" value="ECO:0007669"/>
    <property type="project" value="TreeGrafter"/>
</dbReference>
<dbReference type="GO" id="GO:0004518">
    <property type="term" value="F:nuclease activity"/>
    <property type="evidence" value="ECO:0007669"/>
    <property type="project" value="UniProtKB-KW"/>
</dbReference>
<dbReference type="GO" id="GO:0000967">
    <property type="term" value="P:rRNA 5'-end processing"/>
    <property type="evidence" value="ECO:0007669"/>
    <property type="project" value="UniProtKB-UniRule"/>
</dbReference>
<dbReference type="CDD" id="cd16964">
    <property type="entry name" value="YqgF"/>
    <property type="match status" value="1"/>
</dbReference>
<dbReference type="Gene3D" id="3.30.420.140">
    <property type="entry name" value="YqgF/RNase H-like domain"/>
    <property type="match status" value="1"/>
</dbReference>
<dbReference type="HAMAP" id="MF_00651">
    <property type="entry name" value="Nuclease_YqgF"/>
    <property type="match status" value="1"/>
</dbReference>
<dbReference type="InterPro" id="IPR012337">
    <property type="entry name" value="RNaseH-like_sf"/>
</dbReference>
<dbReference type="InterPro" id="IPR005227">
    <property type="entry name" value="YqgF"/>
</dbReference>
<dbReference type="InterPro" id="IPR006641">
    <property type="entry name" value="YqgF/RNaseH-like_dom"/>
</dbReference>
<dbReference type="InterPro" id="IPR037027">
    <property type="entry name" value="YqgF/RNaseH-like_dom_sf"/>
</dbReference>
<dbReference type="NCBIfam" id="TIGR00250">
    <property type="entry name" value="RNAse_H_YqgF"/>
    <property type="match status" value="1"/>
</dbReference>
<dbReference type="PANTHER" id="PTHR33317">
    <property type="entry name" value="POLYNUCLEOTIDYL TRANSFERASE, RIBONUCLEASE H-LIKE SUPERFAMILY PROTEIN"/>
    <property type="match status" value="1"/>
</dbReference>
<dbReference type="PANTHER" id="PTHR33317:SF4">
    <property type="entry name" value="POLYNUCLEOTIDYL TRANSFERASE, RIBONUCLEASE H-LIKE SUPERFAMILY PROTEIN"/>
    <property type="match status" value="1"/>
</dbReference>
<dbReference type="Pfam" id="PF03652">
    <property type="entry name" value="RuvX"/>
    <property type="match status" value="1"/>
</dbReference>
<dbReference type="SMART" id="SM00732">
    <property type="entry name" value="YqgFc"/>
    <property type="match status" value="1"/>
</dbReference>
<dbReference type="SUPFAM" id="SSF53098">
    <property type="entry name" value="Ribonuclease H-like"/>
    <property type="match status" value="1"/>
</dbReference>
<keyword id="KW-0963">Cytoplasm</keyword>
<keyword id="KW-0378">Hydrolase</keyword>
<keyword id="KW-0540">Nuclease</keyword>
<keyword id="KW-0690">Ribosome biogenesis</keyword>
<protein>
    <recommendedName>
        <fullName evidence="1">Putative pre-16S rRNA nuclease</fullName>
        <ecNumber evidence="1">3.1.-.-</ecNumber>
    </recommendedName>
</protein>
<evidence type="ECO:0000255" key="1">
    <source>
        <dbReference type="HAMAP-Rule" id="MF_00651"/>
    </source>
</evidence>
<comment type="function">
    <text evidence="1">Could be a nuclease involved in processing of the 5'-end of pre-16S rRNA.</text>
</comment>
<comment type="subcellular location">
    <subcellularLocation>
        <location evidence="1">Cytoplasm</location>
    </subcellularLocation>
</comment>
<comment type="similarity">
    <text evidence="1">Belongs to the YqgF nuclease family.</text>
</comment>
<proteinExistence type="inferred from homology"/>
<feature type="chain" id="PRO_0000172077" description="Putative pre-16S rRNA nuclease">
    <location>
        <begin position="1"/>
        <end position="143"/>
    </location>
</feature>
<gene>
    <name type="ordered locus">LJ_0476</name>
</gene>